<accession>Q98PN3</accession>
<comment type="function">
    <text evidence="1">Removes the formyl group from the N-terminal Met of newly synthesized proteins. Requires at least a dipeptide for an efficient rate of reaction. N-terminal L-methionine is a prerequisite for activity but the enzyme has broad specificity at other positions.</text>
</comment>
<comment type="catalytic activity">
    <reaction evidence="1">
        <text>N-terminal N-formyl-L-methionyl-[peptide] + H2O = N-terminal L-methionyl-[peptide] + formate</text>
        <dbReference type="Rhea" id="RHEA:24420"/>
        <dbReference type="Rhea" id="RHEA-COMP:10639"/>
        <dbReference type="Rhea" id="RHEA-COMP:10640"/>
        <dbReference type="ChEBI" id="CHEBI:15377"/>
        <dbReference type="ChEBI" id="CHEBI:15740"/>
        <dbReference type="ChEBI" id="CHEBI:49298"/>
        <dbReference type="ChEBI" id="CHEBI:64731"/>
        <dbReference type="EC" id="3.5.1.88"/>
    </reaction>
</comment>
<comment type="cofactor">
    <cofactor evidence="1">
        <name>Fe(2+)</name>
        <dbReference type="ChEBI" id="CHEBI:29033"/>
    </cofactor>
    <text evidence="1">Binds 1 Fe(2+) ion.</text>
</comment>
<comment type="similarity">
    <text evidence="1">Belongs to the polypeptide deformylase family.</text>
</comment>
<evidence type="ECO:0000255" key="1">
    <source>
        <dbReference type="HAMAP-Rule" id="MF_00163"/>
    </source>
</evidence>
<gene>
    <name evidence="1" type="primary">def</name>
    <name type="ordered locus">MYPU_6890</name>
</gene>
<feature type="chain" id="PRO_0000082804" description="Peptide deformylase">
    <location>
        <begin position="1"/>
        <end position="198"/>
    </location>
</feature>
<feature type="active site" evidence="1">
    <location>
        <position position="171"/>
    </location>
</feature>
<feature type="binding site" evidence="1">
    <location>
        <position position="123"/>
    </location>
    <ligand>
        <name>Fe cation</name>
        <dbReference type="ChEBI" id="CHEBI:24875"/>
    </ligand>
</feature>
<feature type="binding site" evidence="1">
    <location>
        <position position="170"/>
    </location>
    <ligand>
        <name>Fe cation</name>
        <dbReference type="ChEBI" id="CHEBI:24875"/>
    </ligand>
</feature>
<feature type="binding site" evidence="1">
    <location>
        <position position="174"/>
    </location>
    <ligand>
        <name>Fe cation</name>
        <dbReference type="ChEBI" id="CHEBI:24875"/>
    </ligand>
</feature>
<dbReference type="EC" id="3.5.1.88" evidence="1"/>
<dbReference type="EMBL" id="AL445565">
    <property type="protein sequence ID" value="CAC13862.1"/>
    <property type="molecule type" value="Genomic_DNA"/>
</dbReference>
<dbReference type="PIR" id="A90598">
    <property type="entry name" value="A90598"/>
</dbReference>
<dbReference type="RefSeq" id="WP_010925490.1">
    <property type="nucleotide sequence ID" value="NC_002771.1"/>
</dbReference>
<dbReference type="SMR" id="Q98PN3"/>
<dbReference type="STRING" id="272635.gene:17577300"/>
<dbReference type="KEGG" id="mpu:MYPU_6890"/>
<dbReference type="eggNOG" id="COG0242">
    <property type="taxonomic scope" value="Bacteria"/>
</dbReference>
<dbReference type="HOGENOM" id="CLU_061901_4_0_14"/>
<dbReference type="Proteomes" id="UP000000528">
    <property type="component" value="Chromosome"/>
</dbReference>
<dbReference type="GO" id="GO:0046872">
    <property type="term" value="F:metal ion binding"/>
    <property type="evidence" value="ECO:0007669"/>
    <property type="project" value="UniProtKB-KW"/>
</dbReference>
<dbReference type="GO" id="GO:0042586">
    <property type="term" value="F:peptide deformylase activity"/>
    <property type="evidence" value="ECO:0007669"/>
    <property type="project" value="UniProtKB-UniRule"/>
</dbReference>
<dbReference type="GO" id="GO:0043686">
    <property type="term" value="P:co-translational protein modification"/>
    <property type="evidence" value="ECO:0007669"/>
    <property type="project" value="TreeGrafter"/>
</dbReference>
<dbReference type="GO" id="GO:0006412">
    <property type="term" value="P:translation"/>
    <property type="evidence" value="ECO:0007669"/>
    <property type="project" value="UniProtKB-UniRule"/>
</dbReference>
<dbReference type="CDD" id="cd00487">
    <property type="entry name" value="Pep_deformylase"/>
    <property type="match status" value="1"/>
</dbReference>
<dbReference type="Gene3D" id="3.90.45.10">
    <property type="entry name" value="Peptide deformylase"/>
    <property type="match status" value="1"/>
</dbReference>
<dbReference type="HAMAP" id="MF_00163">
    <property type="entry name" value="Pep_deformylase"/>
    <property type="match status" value="1"/>
</dbReference>
<dbReference type="InterPro" id="IPR023635">
    <property type="entry name" value="Peptide_deformylase"/>
</dbReference>
<dbReference type="InterPro" id="IPR036821">
    <property type="entry name" value="Peptide_deformylase_sf"/>
</dbReference>
<dbReference type="NCBIfam" id="TIGR00079">
    <property type="entry name" value="pept_deformyl"/>
    <property type="match status" value="1"/>
</dbReference>
<dbReference type="PANTHER" id="PTHR10458">
    <property type="entry name" value="PEPTIDE DEFORMYLASE"/>
    <property type="match status" value="1"/>
</dbReference>
<dbReference type="PANTHER" id="PTHR10458:SF22">
    <property type="entry name" value="PEPTIDE DEFORMYLASE"/>
    <property type="match status" value="1"/>
</dbReference>
<dbReference type="Pfam" id="PF01327">
    <property type="entry name" value="Pep_deformylase"/>
    <property type="match status" value="1"/>
</dbReference>
<dbReference type="PIRSF" id="PIRSF004749">
    <property type="entry name" value="Pep_def"/>
    <property type="match status" value="1"/>
</dbReference>
<dbReference type="PRINTS" id="PR01576">
    <property type="entry name" value="PDEFORMYLASE"/>
</dbReference>
<dbReference type="SUPFAM" id="SSF56420">
    <property type="entry name" value="Peptide deformylase"/>
    <property type="match status" value="1"/>
</dbReference>
<protein>
    <recommendedName>
        <fullName evidence="1">Peptide deformylase</fullName>
        <shortName evidence="1">PDF</shortName>
        <ecNumber evidence="1">3.5.1.88</ecNumber>
    </recommendedName>
    <alternativeName>
        <fullName evidence="1">Polypeptide deformylase</fullName>
    </alternativeName>
</protein>
<proteinExistence type="inferred from homology"/>
<organism>
    <name type="scientific">Mycoplasmopsis pulmonis (strain UAB CTIP)</name>
    <name type="common">Mycoplasma pulmonis</name>
    <dbReference type="NCBI Taxonomy" id="272635"/>
    <lineage>
        <taxon>Bacteria</taxon>
        <taxon>Bacillati</taxon>
        <taxon>Mycoplasmatota</taxon>
        <taxon>Mycoplasmoidales</taxon>
        <taxon>Metamycoplasmataceae</taxon>
        <taxon>Mycoplasmopsis</taxon>
    </lineage>
</organism>
<reference key="1">
    <citation type="journal article" date="2001" name="Nucleic Acids Res.">
        <title>The complete genome sequence of the murine respiratory pathogen Mycoplasma pulmonis.</title>
        <authorList>
            <person name="Chambaud I."/>
            <person name="Heilig R."/>
            <person name="Ferris S."/>
            <person name="Barbe V."/>
            <person name="Samson D."/>
            <person name="Galisson F."/>
            <person name="Moszer I."/>
            <person name="Dybvig K."/>
            <person name="Wroblewski H."/>
            <person name="Viari A."/>
            <person name="Rocha E.P.C."/>
            <person name="Blanchard A."/>
        </authorList>
    </citation>
    <scope>NUCLEOTIDE SEQUENCE [LARGE SCALE GENOMIC DNA]</scope>
    <source>
        <strain>UAB CTIP</strain>
    </source>
</reference>
<keyword id="KW-0378">Hydrolase</keyword>
<keyword id="KW-0408">Iron</keyword>
<keyword id="KW-0479">Metal-binding</keyword>
<keyword id="KW-0648">Protein biosynthesis</keyword>
<keyword id="KW-1185">Reference proteome</keyword>
<sequence length="198" mass="23040">MLTMFKVEIVQLPKKVLRQKSKNVNIPLNKTNIELAEKMIYHIDDSQGPNTKFRPGVGVAAVQYGILKNVFYVCVPNDSRLTQRDSSQEVKPEDKYLFRDVIFNPEVIWKSDEMVAISQGEGCLSVDESWPNQEGLVRRHMEIKVKGYSYFQKKEMIWHVKGYVAIVFQHELDHLNGMLFIDRIDPKRLWDKSGIKVL</sequence>
<name>DEF_MYCPU</name>